<evidence type="ECO:0000255" key="1">
    <source>
        <dbReference type="HAMAP-Rule" id="MF_01368"/>
    </source>
</evidence>
<evidence type="ECO:0000305" key="2"/>
<name>RL17_MESH2</name>
<proteinExistence type="inferred from homology"/>
<gene>
    <name evidence="1" type="primary">rplQ</name>
    <name type="ordered locus">mhp214</name>
</gene>
<keyword id="KW-0687">Ribonucleoprotein</keyword>
<keyword id="KW-0689">Ribosomal protein</keyword>
<reference key="1">
    <citation type="journal article" date="2004" name="J. Bacteriol.">
        <title>The genome sequence of Mycoplasma hyopneumoniae strain 232, the agent of swine mycoplasmosis.</title>
        <authorList>
            <person name="Minion F.C."/>
            <person name="Lefkowitz E.J."/>
            <person name="Madsen M.L."/>
            <person name="Cleary B.J."/>
            <person name="Swartzell S.M."/>
            <person name="Mahairas G.G."/>
        </authorList>
    </citation>
    <scope>NUCLEOTIDE SEQUENCE [LARGE SCALE GENOMIC DNA]</scope>
    <source>
        <strain>232</strain>
    </source>
</reference>
<dbReference type="EMBL" id="AE017332">
    <property type="protein sequence ID" value="AAV27470.1"/>
    <property type="molecule type" value="Genomic_DNA"/>
</dbReference>
<dbReference type="RefSeq" id="WP_011206051.1">
    <property type="nucleotide sequence ID" value="NC_006360.1"/>
</dbReference>
<dbReference type="SMR" id="Q601I8"/>
<dbReference type="KEGG" id="mhy:mhp214"/>
<dbReference type="eggNOG" id="COG0203">
    <property type="taxonomic scope" value="Bacteria"/>
</dbReference>
<dbReference type="HOGENOM" id="CLU_074407_2_2_14"/>
<dbReference type="PhylomeDB" id="Q601I8"/>
<dbReference type="Proteomes" id="UP000006822">
    <property type="component" value="Chromosome"/>
</dbReference>
<dbReference type="GO" id="GO:0022625">
    <property type="term" value="C:cytosolic large ribosomal subunit"/>
    <property type="evidence" value="ECO:0007669"/>
    <property type="project" value="TreeGrafter"/>
</dbReference>
<dbReference type="GO" id="GO:0003735">
    <property type="term" value="F:structural constituent of ribosome"/>
    <property type="evidence" value="ECO:0007669"/>
    <property type="project" value="InterPro"/>
</dbReference>
<dbReference type="GO" id="GO:0006412">
    <property type="term" value="P:translation"/>
    <property type="evidence" value="ECO:0007669"/>
    <property type="project" value="UniProtKB-UniRule"/>
</dbReference>
<dbReference type="Gene3D" id="3.90.1030.10">
    <property type="entry name" value="Ribosomal protein L17"/>
    <property type="match status" value="1"/>
</dbReference>
<dbReference type="HAMAP" id="MF_01368">
    <property type="entry name" value="Ribosomal_bL17"/>
    <property type="match status" value="1"/>
</dbReference>
<dbReference type="InterPro" id="IPR000456">
    <property type="entry name" value="Ribosomal_bL17"/>
</dbReference>
<dbReference type="InterPro" id="IPR047859">
    <property type="entry name" value="Ribosomal_bL17_CS"/>
</dbReference>
<dbReference type="InterPro" id="IPR036373">
    <property type="entry name" value="Ribosomal_bL17_sf"/>
</dbReference>
<dbReference type="NCBIfam" id="TIGR00059">
    <property type="entry name" value="L17"/>
    <property type="match status" value="1"/>
</dbReference>
<dbReference type="PANTHER" id="PTHR14413:SF16">
    <property type="entry name" value="LARGE RIBOSOMAL SUBUNIT PROTEIN BL17M"/>
    <property type="match status" value="1"/>
</dbReference>
<dbReference type="PANTHER" id="PTHR14413">
    <property type="entry name" value="RIBOSOMAL PROTEIN L17"/>
    <property type="match status" value="1"/>
</dbReference>
<dbReference type="Pfam" id="PF01196">
    <property type="entry name" value="Ribosomal_L17"/>
    <property type="match status" value="1"/>
</dbReference>
<dbReference type="SUPFAM" id="SSF64263">
    <property type="entry name" value="Prokaryotic ribosomal protein L17"/>
    <property type="match status" value="1"/>
</dbReference>
<dbReference type="PROSITE" id="PS01167">
    <property type="entry name" value="RIBOSOMAL_L17"/>
    <property type="match status" value="1"/>
</dbReference>
<protein>
    <recommendedName>
        <fullName evidence="1">Large ribosomal subunit protein bL17</fullName>
    </recommendedName>
    <alternativeName>
        <fullName evidence="2">50S ribosomal protein L17</fullName>
    </alternativeName>
</protein>
<comment type="subunit">
    <text evidence="1">Part of the 50S ribosomal subunit. Contacts protein L32.</text>
</comment>
<comment type="similarity">
    <text evidence="1">Belongs to the bacterial ribosomal protein bL17 family.</text>
</comment>
<accession>Q601I8</accession>
<organism>
    <name type="scientific">Mesomycoplasma hyopneumoniae (strain 232)</name>
    <name type="common">Mycoplasma hyopneumoniae</name>
    <dbReference type="NCBI Taxonomy" id="295358"/>
    <lineage>
        <taxon>Bacteria</taxon>
        <taxon>Bacillati</taxon>
        <taxon>Mycoplasmatota</taxon>
        <taxon>Mycoplasmoidales</taxon>
        <taxon>Metamycoplasmataceae</taxon>
        <taxon>Mesomycoplasma</taxon>
    </lineage>
</organism>
<sequence length="120" mass="13857">MANPHQIYRHDAAWDRQVFRSLATSLILHGHIKTTLDRAKRLRSVVEKIITKAKKNDLAARRQILSFLYAQKTKAGIKVMPYLFNKVAPRYQERNGGYTRIVRIPSRLGDNSKMAIIELV</sequence>
<feature type="chain" id="PRO_0000267896" description="Large ribosomal subunit protein bL17">
    <location>
        <begin position="1"/>
        <end position="120"/>
    </location>
</feature>